<accession>B4RRY0</accession>
<accession>F2GA65</accession>
<keyword id="KW-0418">Kinase</keyword>
<keyword id="KW-0547">Nucleotide-binding</keyword>
<keyword id="KW-0723">Serine/threonine-protein kinase</keyword>
<keyword id="KW-0808">Transferase</keyword>
<protein>
    <recommendedName>
        <fullName evidence="1">Putative phosphoenolpyruvate synthase regulatory protein</fullName>
        <shortName evidence="1">PEP synthase regulatory protein</shortName>
        <shortName evidence="1">PSRP</shortName>
        <ecNumber evidence="1">2.7.11.33</ecNumber>
        <ecNumber evidence="1">2.7.4.28</ecNumber>
    </recommendedName>
    <alternativeName>
        <fullName evidence="1">Pyruvate, water dikinase regulatory protein</fullName>
    </alternativeName>
</protein>
<evidence type="ECO:0000255" key="1">
    <source>
        <dbReference type="HAMAP-Rule" id="MF_01062"/>
    </source>
</evidence>
<proteinExistence type="inferred from homology"/>
<organism>
    <name type="scientific">Alteromonas mediterranea (strain DSM 17117 / CIP 110805 / LMG 28347 / Deep ecotype)</name>
    <dbReference type="NCBI Taxonomy" id="1774373"/>
    <lineage>
        <taxon>Bacteria</taxon>
        <taxon>Pseudomonadati</taxon>
        <taxon>Pseudomonadota</taxon>
        <taxon>Gammaproteobacteria</taxon>
        <taxon>Alteromonadales</taxon>
        <taxon>Alteromonadaceae</taxon>
        <taxon>Alteromonas/Salinimonas group</taxon>
        <taxon>Alteromonas</taxon>
    </lineage>
</organism>
<comment type="function">
    <text evidence="1">Bifunctional serine/threonine kinase and phosphorylase involved in the regulation of the phosphoenolpyruvate synthase (PEPS) by catalyzing its phosphorylation/dephosphorylation.</text>
</comment>
<comment type="catalytic activity">
    <reaction evidence="1">
        <text>[pyruvate, water dikinase] + ADP = [pyruvate, water dikinase]-phosphate + AMP + H(+)</text>
        <dbReference type="Rhea" id="RHEA:46020"/>
        <dbReference type="Rhea" id="RHEA-COMP:11425"/>
        <dbReference type="Rhea" id="RHEA-COMP:11426"/>
        <dbReference type="ChEBI" id="CHEBI:15378"/>
        <dbReference type="ChEBI" id="CHEBI:43176"/>
        <dbReference type="ChEBI" id="CHEBI:68546"/>
        <dbReference type="ChEBI" id="CHEBI:456215"/>
        <dbReference type="ChEBI" id="CHEBI:456216"/>
        <dbReference type="EC" id="2.7.11.33"/>
    </reaction>
</comment>
<comment type="catalytic activity">
    <reaction evidence="1">
        <text>[pyruvate, water dikinase]-phosphate + phosphate + H(+) = [pyruvate, water dikinase] + diphosphate</text>
        <dbReference type="Rhea" id="RHEA:48580"/>
        <dbReference type="Rhea" id="RHEA-COMP:11425"/>
        <dbReference type="Rhea" id="RHEA-COMP:11426"/>
        <dbReference type="ChEBI" id="CHEBI:15378"/>
        <dbReference type="ChEBI" id="CHEBI:33019"/>
        <dbReference type="ChEBI" id="CHEBI:43176"/>
        <dbReference type="ChEBI" id="CHEBI:43474"/>
        <dbReference type="ChEBI" id="CHEBI:68546"/>
        <dbReference type="EC" id="2.7.4.28"/>
    </reaction>
</comment>
<comment type="similarity">
    <text evidence="1">Belongs to the pyruvate, phosphate/water dikinase regulatory protein family. PSRP subfamily.</text>
</comment>
<name>PSRP_ALTMD</name>
<gene>
    <name type="ordered locus">MADE_1008595</name>
</gene>
<sequence length="270" mass="30884">MRTAFYISDGTAITAEVFGHALLSLFPVSFNHNTIPFVETEEQAHKVLQQISESFQDTGERPLVFYTIVNVDVRKIISKSVGINYNFLDQFVAPLEKVLGVPSKPEKHRTHSIHETTYDIRIEAVNYALANDDGSNLKDYDEADIILTGVSRSGKTPTSLYLALQYGIKAANYPFTEEDMGDMLKLPPTLRRYKHKLFGLTIAADRLHQIRSERRANSKYASIQQCRMELREVENLYRKEKIPFLNSTKYSIEEISAKILAETGLKRRKY</sequence>
<dbReference type="EC" id="2.7.11.33" evidence="1"/>
<dbReference type="EC" id="2.7.4.28" evidence="1"/>
<dbReference type="EMBL" id="CP001103">
    <property type="protein sequence ID" value="AEA97859.1"/>
    <property type="molecule type" value="Genomic_DNA"/>
</dbReference>
<dbReference type="RefSeq" id="WP_012518191.1">
    <property type="nucleotide sequence ID" value="NC_011138.3"/>
</dbReference>
<dbReference type="SMR" id="B4RRY0"/>
<dbReference type="KEGG" id="amc:MADE_1008595"/>
<dbReference type="HOGENOM" id="CLU_046206_1_0_6"/>
<dbReference type="Proteomes" id="UP000001870">
    <property type="component" value="Chromosome"/>
</dbReference>
<dbReference type="GO" id="GO:0043531">
    <property type="term" value="F:ADP binding"/>
    <property type="evidence" value="ECO:0007669"/>
    <property type="project" value="UniProtKB-UniRule"/>
</dbReference>
<dbReference type="GO" id="GO:0005524">
    <property type="term" value="F:ATP binding"/>
    <property type="evidence" value="ECO:0007669"/>
    <property type="project" value="InterPro"/>
</dbReference>
<dbReference type="GO" id="GO:0016776">
    <property type="term" value="F:phosphotransferase activity, phosphate group as acceptor"/>
    <property type="evidence" value="ECO:0007669"/>
    <property type="project" value="UniProtKB-UniRule"/>
</dbReference>
<dbReference type="GO" id="GO:0004674">
    <property type="term" value="F:protein serine/threonine kinase activity"/>
    <property type="evidence" value="ECO:0007669"/>
    <property type="project" value="UniProtKB-UniRule"/>
</dbReference>
<dbReference type="HAMAP" id="MF_01062">
    <property type="entry name" value="PSRP"/>
    <property type="match status" value="1"/>
</dbReference>
<dbReference type="InterPro" id="IPR005177">
    <property type="entry name" value="Kinase-pyrophosphorylase"/>
</dbReference>
<dbReference type="InterPro" id="IPR026530">
    <property type="entry name" value="PSRP"/>
</dbReference>
<dbReference type="NCBIfam" id="NF003742">
    <property type="entry name" value="PRK05339.1"/>
    <property type="match status" value="1"/>
</dbReference>
<dbReference type="PANTHER" id="PTHR31756">
    <property type="entry name" value="PYRUVATE, PHOSPHATE DIKINASE REGULATORY PROTEIN 1, CHLOROPLASTIC"/>
    <property type="match status" value="1"/>
</dbReference>
<dbReference type="PANTHER" id="PTHR31756:SF3">
    <property type="entry name" value="PYRUVATE, PHOSPHATE DIKINASE REGULATORY PROTEIN 1, CHLOROPLASTIC"/>
    <property type="match status" value="1"/>
</dbReference>
<dbReference type="Pfam" id="PF03618">
    <property type="entry name" value="Kinase-PPPase"/>
    <property type="match status" value="1"/>
</dbReference>
<feature type="chain" id="PRO_1000136450" description="Putative phosphoenolpyruvate synthase regulatory protein">
    <location>
        <begin position="1"/>
        <end position="270"/>
    </location>
</feature>
<feature type="binding site" evidence="1">
    <location>
        <begin position="149"/>
        <end position="156"/>
    </location>
    <ligand>
        <name>ADP</name>
        <dbReference type="ChEBI" id="CHEBI:456216"/>
    </ligand>
</feature>
<reference key="1">
    <citation type="journal article" date="2008" name="ISME J.">
        <title>Comparative genomics of two ecotypes of the marine planktonic copiotroph Alteromonas macleodii suggests alternative lifestyles associated with different kinds of particulate organic matter.</title>
        <authorList>
            <person name="Ivars-Martinez E."/>
            <person name="Martin-Cuadrado A.-B."/>
            <person name="D'Auria G."/>
            <person name="Mira A."/>
            <person name="Ferriera S."/>
            <person name="Johnson J."/>
            <person name="Friedman R."/>
            <person name="Rodriguez-Valera F."/>
        </authorList>
    </citation>
    <scope>NUCLEOTIDE SEQUENCE [LARGE SCALE GENOMIC DNA]</scope>
    <source>
        <strain>DSM 17117 / CIP 110805 / LMG 28347 / Deep ecotype</strain>
    </source>
</reference>